<comment type="function">
    <text evidence="1">Catalyzes the alpha,beta-elimination reaction of D-cysteine and of several D-cysteine derivatives. It could be a defense mechanism against D-cysteine.</text>
</comment>
<comment type="catalytic activity">
    <reaction evidence="1">
        <text>D-cysteine + H2O = hydrogen sulfide + pyruvate + NH4(+) + H(+)</text>
        <dbReference type="Rhea" id="RHEA:11268"/>
        <dbReference type="ChEBI" id="CHEBI:15361"/>
        <dbReference type="ChEBI" id="CHEBI:15377"/>
        <dbReference type="ChEBI" id="CHEBI:15378"/>
        <dbReference type="ChEBI" id="CHEBI:28938"/>
        <dbReference type="ChEBI" id="CHEBI:29919"/>
        <dbReference type="ChEBI" id="CHEBI:35236"/>
        <dbReference type="EC" id="4.4.1.15"/>
    </reaction>
</comment>
<comment type="cofactor">
    <cofactor evidence="1">
        <name>pyridoxal 5'-phosphate</name>
        <dbReference type="ChEBI" id="CHEBI:597326"/>
    </cofactor>
</comment>
<comment type="subunit">
    <text evidence="1">Homodimer.</text>
</comment>
<comment type="similarity">
    <text evidence="1">Belongs to the ACC deaminase/D-cysteine desulfhydrase family.</text>
</comment>
<accession>Q0T3K8</accession>
<gene>
    <name evidence="1" type="primary">dcyD</name>
    <name type="ordered locus">SFV_1963</name>
</gene>
<keyword id="KW-0456">Lyase</keyword>
<keyword id="KW-0663">Pyridoxal phosphate</keyword>
<proteinExistence type="inferred from homology"/>
<sequence length="328" mass="35167">MPLHNLTRFPRLEFIGAPTPLEYLPRFSDYLGREIFIKRDEVTPMAMGGNKLRKLEFLAADALREGADTLITAGAIQSNHVRQTAAVAAKLGLHCVALLENPIGTTAENYLTNGNRLLLDLFNTQIEMCDALTDPNAQLEELATRVEAQGFRPYVIPVGGSNALGALGYVESALEIAQQCEGAVNISSVVVASGSAGTHAGLAVGLEHLMPESELIGVTVSRSVADQLPKVVNLQQAIAKELELTASAEILLWDDYFAPGYGVPNDEGMEAVKLLARLEGILLDPVYTGKAMAGLIDGISQKRFKDEGPILFIHTGGAPALFAYHPHV</sequence>
<name>DCYD_SHIF8</name>
<dbReference type="EC" id="4.4.1.15" evidence="1"/>
<dbReference type="EMBL" id="CP000266">
    <property type="protein sequence ID" value="ABF04107.1"/>
    <property type="molecule type" value="Genomic_DNA"/>
</dbReference>
<dbReference type="RefSeq" id="WP_001128248.1">
    <property type="nucleotide sequence ID" value="NC_008258.1"/>
</dbReference>
<dbReference type="SMR" id="Q0T3K8"/>
<dbReference type="KEGG" id="sfv:SFV_1963"/>
<dbReference type="HOGENOM" id="CLU_048897_1_0_6"/>
<dbReference type="Proteomes" id="UP000000659">
    <property type="component" value="Chromosome"/>
</dbReference>
<dbReference type="GO" id="GO:0019148">
    <property type="term" value="F:D-cysteine desulfhydrase activity"/>
    <property type="evidence" value="ECO:0007669"/>
    <property type="project" value="UniProtKB-UniRule"/>
</dbReference>
<dbReference type="GO" id="GO:0046416">
    <property type="term" value="P:D-amino acid metabolic process"/>
    <property type="evidence" value="ECO:0007669"/>
    <property type="project" value="UniProtKB-UniRule"/>
</dbReference>
<dbReference type="CDD" id="cd06449">
    <property type="entry name" value="ACCD"/>
    <property type="match status" value="1"/>
</dbReference>
<dbReference type="FunFam" id="3.40.50.1100:FF:000019">
    <property type="entry name" value="D-cysteine desulfhydrase"/>
    <property type="match status" value="1"/>
</dbReference>
<dbReference type="Gene3D" id="3.40.50.1100">
    <property type="match status" value="2"/>
</dbReference>
<dbReference type="HAMAP" id="MF_01045">
    <property type="entry name" value="D_Cys_desulfhydr"/>
    <property type="match status" value="1"/>
</dbReference>
<dbReference type="InterPro" id="IPR027278">
    <property type="entry name" value="ACCD_DCysDesulf"/>
</dbReference>
<dbReference type="InterPro" id="IPR005966">
    <property type="entry name" value="D-Cys_desShydrase"/>
</dbReference>
<dbReference type="InterPro" id="IPR023702">
    <property type="entry name" value="D_Cys_desulphydr_bac"/>
</dbReference>
<dbReference type="InterPro" id="IPR001926">
    <property type="entry name" value="TrpB-like_PALP"/>
</dbReference>
<dbReference type="InterPro" id="IPR036052">
    <property type="entry name" value="TrpB-like_PALP_sf"/>
</dbReference>
<dbReference type="NCBIfam" id="TIGR01275">
    <property type="entry name" value="ACC_deam_rel"/>
    <property type="match status" value="1"/>
</dbReference>
<dbReference type="NCBIfam" id="NF003029">
    <property type="entry name" value="PRK03910.1-1"/>
    <property type="match status" value="1"/>
</dbReference>
<dbReference type="NCBIfam" id="NF003030">
    <property type="entry name" value="PRK03910.1-3"/>
    <property type="match status" value="1"/>
</dbReference>
<dbReference type="NCBIfam" id="NF003032">
    <property type="entry name" value="PRK03910.1-5"/>
    <property type="match status" value="1"/>
</dbReference>
<dbReference type="PANTHER" id="PTHR43780">
    <property type="entry name" value="1-AMINOCYCLOPROPANE-1-CARBOXYLATE DEAMINASE-RELATED"/>
    <property type="match status" value="1"/>
</dbReference>
<dbReference type="PANTHER" id="PTHR43780:SF2">
    <property type="entry name" value="1-AMINOCYCLOPROPANE-1-CARBOXYLATE DEAMINASE-RELATED"/>
    <property type="match status" value="1"/>
</dbReference>
<dbReference type="Pfam" id="PF00291">
    <property type="entry name" value="PALP"/>
    <property type="match status" value="1"/>
</dbReference>
<dbReference type="PIRSF" id="PIRSF006278">
    <property type="entry name" value="ACCD_DCysDesulf"/>
    <property type="match status" value="1"/>
</dbReference>
<dbReference type="SUPFAM" id="SSF53686">
    <property type="entry name" value="Tryptophan synthase beta subunit-like PLP-dependent enzymes"/>
    <property type="match status" value="1"/>
</dbReference>
<protein>
    <recommendedName>
        <fullName evidence="1">D-cysteine desulfhydrase</fullName>
        <ecNumber evidence="1">4.4.1.15</ecNumber>
    </recommendedName>
</protein>
<evidence type="ECO:0000255" key="1">
    <source>
        <dbReference type="HAMAP-Rule" id="MF_01045"/>
    </source>
</evidence>
<feature type="chain" id="PRO_1000064267" description="D-cysteine desulfhydrase">
    <location>
        <begin position="1"/>
        <end position="328"/>
    </location>
</feature>
<feature type="modified residue" description="N6-(pyridoxal phosphate)lysine" evidence="1">
    <location>
        <position position="51"/>
    </location>
</feature>
<reference key="1">
    <citation type="journal article" date="2006" name="BMC Genomics">
        <title>Complete genome sequence of Shigella flexneri 5b and comparison with Shigella flexneri 2a.</title>
        <authorList>
            <person name="Nie H."/>
            <person name="Yang F."/>
            <person name="Zhang X."/>
            <person name="Yang J."/>
            <person name="Chen L."/>
            <person name="Wang J."/>
            <person name="Xiong Z."/>
            <person name="Peng J."/>
            <person name="Sun L."/>
            <person name="Dong J."/>
            <person name="Xue Y."/>
            <person name="Xu X."/>
            <person name="Chen S."/>
            <person name="Yao Z."/>
            <person name="Shen Y."/>
            <person name="Jin Q."/>
        </authorList>
    </citation>
    <scope>NUCLEOTIDE SEQUENCE [LARGE SCALE GENOMIC DNA]</scope>
    <source>
        <strain>8401</strain>
    </source>
</reference>
<organism>
    <name type="scientific">Shigella flexneri serotype 5b (strain 8401)</name>
    <dbReference type="NCBI Taxonomy" id="373384"/>
    <lineage>
        <taxon>Bacteria</taxon>
        <taxon>Pseudomonadati</taxon>
        <taxon>Pseudomonadota</taxon>
        <taxon>Gammaproteobacteria</taxon>
        <taxon>Enterobacterales</taxon>
        <taxon>Enterobacteriaceae</taxon>
        <taxon>Shigella</taxon>
    </lineage>
</organism>